<keyword id="KW-0025">Alternative splicing</keyword>
<keyword id="KW-0963">Cytoplasm</keyword>
<keyword id="KW-0378">Hydrolase</keyword>
<keyword id="KW-0479">Metal-binding</keyword>
<keyword id="KW-0539">Nucleus</keyword>
<keyword id="KW-0645">Protease</keyword>
<keyword id="KW-1185">Reference proteome</keyword>
<keyword id="KW-0788">Thiol protease</keyword>
<keyword id="KW-0833">Ubl conjugation pathway</keyword>
<keyword id="KW-0862">Zinc</keyword>
<keyword id="KW-0863">Zinc-finger</keyword>
<reference key="1">
    <citation type="journal article" date="2000" name="Plant Physiol.">
        <title>The ubiquitin-specific protease family from Arabidopsis. AtUBP1 and 2 are required for the resistance to the amino acid analog canavanine.</title>
        <authorList>
            <person name="Yan N."/>
            <person name="Doelling J.H."/>
            <person name="Falbel T.G."/>
            <person name="Durski A.M."/>
            <person name="Vierstra R.D."/>
        </authorList>
    </citation>
    <scope>NUCLEOTIDE SEQUENCE [MRNA]</scope>
    <scope>GENE FAMILY ORGANIZATION</scope>
    <scope>NOMENCLATURE</scope>
    <source>
        <strain>cv. Columbia</strain>
    </source>
</reference>
<reference key="2">
    <citation type="journal article" date="2000" name="Nature">
        <title>Sequence and analysis of chromosome 1 of the plant Arabidopsis thaliana.</title>
        <authorList>
            <person name="Theologis A."/>
            <person name="Ecker J.R."/>
            <person name="Palm C.J."/>
            <person name="Federspiel N.A."/>
            <person name="Kaul S."/>
            <person name="White O."/>
            <person name="Alonso J."/>
            <person name="Altafi H."/>
            <person name="Araujo R."/>
            <person name="Bowman C.L."/>
            <person name="Brooks S.Y."/>
            <person name="Buehler E."/>
            <person name="Chan A."/>
            <person name="Chao Q."/>
            <person name="Chen H."/>
            <person name="Cheuk R.F."/>
            <person name="Chin C.W."/>
            <person name="Chung M.K."/>
            <person name="Conn L."/>
            <person name="Conway A.B."/>
            <person name="Conway A.R."/>
            <person name="Creasy T.H."/>
            <person name="Dewar K."/>
            <person name="Dunn P."/>
            <person name="Etgu P."/>
            <person name="Feldblyum T.V."/>
            <person name="Feng J.-D."/>
            <person name="Fong B."/>
            <person name="Fujii C.Y."/>
            <person name="Gill J.E."/>
            <person name="Goldsmith A.D."/>
            <person name="Haas B."/>
            <person name="Hansen N.F."/>
            <person name="Hughes B."/>
            <person name="Huizar L."/>
            <person name="Hunter J.L."/>
            <person name="Jenkins J."/>
            <person name="Johnson-Hopson C."/>
            <person name="Khan S."/>
            <person name="Khaykin E."/>
            <person name="Kim C.J."/>
            <person name="Koo H.L."/>
            <person name="Kremenetskaia I."/>
            <person name="Kurtz D.B."/>
            <person name="Kwan A."/>
            <person name="Lam B."/>
            <person name="Langin-Hooper S."/>
            <person name="Lee A."/>
            <person name="Lee J.M."/>
            <person name="Lenz C.A."/>
            <person name="Li J.H."/>
            <person name="Li Y.-P."/>
            <person name="Lin X."/>
            <person name="Liu S.X."/>
            <person name="Liu Z.A."/>
            <person name="Luros J.S."/>
            <person name="Maiti R."/>
            <person name="Marziali A."/>
            <person name="Militscher J."/>
            <person name="Miranda M."/>
            <person name="Nguyen M."/>
            <person name="Nierman W.C."/>
            <person name="Osborne B.I."/>
            <person name="Pai G."/>
            <person name="Peterson J."/>
            <person name="Pham P.K."/>
            <person name="Rizzo M."/>
            <person name="Rooney T."/>
            <person name="Rowley D."/>
            <person name="Sakano H."/>
            <person name="Salzberg S.L."/>
            <person name="Schwartz J.R."/>
            <person name="Shinn P."/>
            <person name="Southwick A.M."/>
            <person name="Sun H."/>
            <person name="Tallon L.J."/>
            <person name="Tambunga G."/>
            <person name="Toriumi M.J."/>
            <person name="Town C.D."/>
            <person name="Utterback T."/>
            <person name="Van Aken S."/>
            <person name="Vaysberg M."/>
            <person name="Vysotskaia V.S."/>
            <person name="Walker M."/>
            <person name="Wu D."/>
            <person name="Yu G."/>
            <person name="Fraser C.M."/>
            <person name="Venter J.C."/>
            <person name="Davis R.W."/>
        </authorList>
    </citation>
    <scope>NUCLEOTIDE SEQUENCE [LARGE SCALE GENOMIC DNA]</scope>
    <source>
        <strain>cv. Columbia</strain>
    </source>
</reference>
<reference key="3">
    <citation type="journal article" date="2017" name="Plant J.">
        <title>Araport11: a complete reannotation of the Arabidopsis thaliana reference genome.</title>
        <authorList>
            <person name="Cheng C.Y."/>
            <person name="Krishnakumar V."/>
            <person name="Chan A.P."/>
            <person name="Thibaud-Nissen F."/>
            <person name="Schobel S."/>
            <person name="Town C.D."/>
        </authorList>
    </citation>
    <scope>GENOME REANNOTATION</scope>
    <source>
        <strain>cv. Columbia</strain>
    </source>
</reference>
<reference key="4">
    <citation type="journal article" date="2008" name="Plant J.">
        <title>Functional characterization of the Arabidopsis ubiquitin-specific protease gene family reveals specific role and redundancy of individual members in development.</title>
        <authorList>
            <person name="Liu Y."/>
            <person name="Wang F."/>
            <person name="Zhang H."/>
            <person name="He H."/>
            <person name="Ma L."/>
            <person name="Deng X.W."/>
        </authorList>
    </citation>
    <scope>FUNCTION</scope>
    <scope>CATALYTIC ACTIVITY</scope>
    <scope>SUBCELLULAR LOCATION</scope>
    <scope>TISSUE SPECIFICITY</scope>
    <scope>DISRUPTION PHENOTYPE</scope>
    <scope>MUTAGENESIS OF CYS-447</scope>
</reference>
<reference key="5">
    <citation type="journal article" date="2014" name="Plant Cell">
        <title>The ubiquitin receptor DA1 regulates seed and organ size by modulating the stability of the ubiquitin-specific protease UBP15/SOD2 in Arabidopsis.</title>
        <authorList>
            <person name="Du L."/>
            <person name="Li N."/>
            <person name="Chen L."/>
            <person name="Xu Y."/>
            <person name="Li Y."/>
            <person name="Zhang Y."/>
            <person name="Li C."/>
            <person name="Li Y."/>
        </authorList>
    </citation>
    <scope>FUNCTION</scope>
    <scope>INTERACTION WITH DA1</scope>
    <scope>DISRUPTION PHENOTYPE</scope>
</reference>
<gene>
    <name evidence="6" type="primary">UBP15</name>
    <name evidence="7" type="synonym">SOD2</name>
    <name type="ordered locus">At1g17110</name>
    <name type="ORF">F20D23.20</name>
</gene>
<sequence>MLEPRGADIPILFLVLVVLPVVAYILLGKWSNISEKRVRANLLAQMAAEEALRAETVVNADRGVRFESVATENRAQRTRTKTVSAGGGAVRAEFDAGARETVAEQRSDSVTATCGVTVVAPVNNNELHVCARCFGPAKTRCSRCKSVRYCSGKCQIIHWRVAHKDECVPVESCSSSSERVSFEKDSVLYDHGMDSTMYSNNTTQAAKGKTSKSSVDFASLGISQNDITPQINTQGRKSVGKQHSSKANRESCRRDSATVFDSSDEAASAGGDNKTSHIKHKSRGNSYAAETNPRRHSVDSSAVQMNGQSFVSGMQESHKHENNLGVRSSFGCPNTQYPSNGTRTATLPRTGINKSGEQSCTETSKKGQVAAVSKTVRSKDTGISEESNGISSTMGIMKMMGLRNSTKHDDRYKNLKMLFPYEEFLKFFQCEVFDLSPRGLVNCGNSCYANAVLQSLTCTKPLVAYLLRRSHSRSCSGKDWCLMCELEQHVMMLRESGGPLSASRILSHMRSINCQIGDGSQEDAHEFLRLLVASMQSICLERLGGETKVDPRLQETTLVQHMFGGRLRSKVKCLRCDHESERYENIMDLTLEIYGWVESLQDALTQFTRPEDLDGENMYRCSRCAGYVRARKELSIHEAPNILTIVLKRFQEGRYGKINKCISFPEMLDMIPFMTRTGDVPPLYMLYAVIVHLDTLNASFSGHYISYVKDLRGNWYRIDDSEIHPVPMTQVMSEGAYMLFYMRSYPRPQRGEHNGKAPVHHSQPRNEMKEQRKPVNRFKPRADHKNTESSSSEWSLFTSSDEASFTTESTRDSFSTIDYTDVCHVVDSSSPFAIFNNVYHNVEPSPHNTVACRMFSGTKPETRYFVEQETNHNNTVVLDATPSLYPIPAPYPPHDYYDQSMYVNYETNPEFNNGQDQDRTYSYW</sequence>
<protein>
    <recommendedName>
        <fullName evidence="8">Ubiquitin carboxyl-terminal hydrolase 15</fullName>
        <ecNumber evidence="4">3.4.19.12</ecNumber>
    </recommendedName>
    <alternativeName>
        <fullName evidence="8">Deubiquitinating enzyme 15</fullName>
    </alternativeName>
    <alternativeName>
        <fullName evidence="7">Protein SUPPRESSOR 2 OF DA1</fullName>
    </alternativeName>
    <alternativeName>
        <fullName evidence="8">Ubiquitin thioesterase 15</fullName>
    </alternativeName>
    <alternativeName>
        <fullName evidence="6">Ubiquitin-specific protease 15</fullName>
        <shortName evidence="6">AtUBP15</shortName>
    </alternativeName>
</protein>
<feature type="chain" id="PRO_0000313041" description="Ubiquitin carboxyl-terminal hydrolase 15">
    <location>
        <begin position="1"/>
        <end position="924"/>
    </location>
</feature>
<feature type="domain" description="USP">
    <location>
        <begin position="438"/>
        <end position="744"/>
    </location>
</feature>
<feature type="zinc finger region" description="MYND-type" evidence="1">
    <location>
        <begin position="130"/>
        <end position="167"/>
    </location>
</feature>
<feature type="region of interest" description="Disordered" evidence="3">
    <location>
        <begin position="226"/>
        <end position="301"/>
    </location>
</feature>
<feature type="region of interest" description="Disordered" evidence="3">
    <location>
        <begin position="317"/>
        <end position="366"/>
    </location>
</feature>
<feature type="region of interest" description="Disordered" evidence="3">
    <location>
        <begin position="750"/>
        <end position="793"/>
    </location>
</feature>
<feature type="compositionally biased region" description="Polar residues" evidence="3">
    <location>
        <begin position="226"/>
        <end position="236"/>
    </location>
</feature>
<feature type="compositionally biased region" description="Basic and acidic residues" evidence="3">
    <location>
        <begin position="247"/>
        <end position="256"/>
    </location>
</feature>
<feature type="compositionally biased region" description="Polar residues" evidence="3">
    <location>
        <begin position="331"/>
        <end position="362"/>
    </location>
</feature>
<feature type="compositionally biased region" description="Basic and acidic residues" evidence="3">
    <location>
        <begin position="764"/>
        <end position="773"/>
    </location>
</feature>
<feature type="active site" description="Nucleophile" evidence="2">
    <location>
        <position position="447"/>
    </location>
</feature>
<feature type="active site" description="Proton acceptor" evidence="2">
    <location>
        <position position="703"/>
    </location>
</feature>
<feature type="binding site" evidence="1">
    <location>
        <position position="130"/>
    </location>
    <ligand>
        <name>Zn(2+)</name>
        <dbReference type="ChEBI" id="CHEBI:29105"/>
        <label>1</label>
    </ligand>
</feature>
<feature type="binding site" evidence="1">
    <location>
        <position position="133"/>
    </location>
    <ligand>
        <name>Zn(2+)</name>
        <dbReference type="ChEBI" id="CHEBI:29105"/>
        <label>1</label>
    </ligand>
</feature>
<feature type="binding site" evidence="1">
    <location>
        <position position="141"/>
    </location>
    <ligand>
        <name>Zn(2+)</name>
        <dbReference type="ChEBI" id="CHEBI:29105"/>
        <label>2</label>
    </ligand>
</feature>
<feature type="binding site" evidence="1">
    <location>
        <position position="144"/>
    </location>
    <ligand>
        <name>Zn(2+)</name>
        <dbReference type="ChEBI" id="CHEBI:29105"/>
        <label>2</label>
    </ligand>
</feature>
<feature type="binding site" evidence="1">
    <location>
        <position position="150"/>
    </location>
    <ligand>
        <name>Zn(2+)</name>
        <dbReference type="ChEBI" id="CHEBI:29105"/>
        <label>1</label>
    </ligand>
</feature>
<feature type="binding site" evidence="1">
    <location>
        <position position="154"/>
    </location>
    <ligand>
        <name>Zn(2+)</name>
        <dbReference type="ChEBI" id="CHEBI:29105"/>
        <label>1</label>
    </ligand>
</feature>
<feature type="binding site" evidence="1">
    <location>
        <position position="163"/>
    </location>
    <ligand>
        <name>Zn(2+)</name>
        <dbReference type="ChEBI" id="CHEBI:29105"/>
        <label>2</label>
    </ligand>
</feature>
<feature type="binding site" evidence="1">
    <location>
        <position position="167"/>
    </location>
    <ligand>
        <name>Zn(2+)</name>
        <dbReference type="ChEBI" id="CHEBI:29105"/>
        <label>2</label>
    </ligand>
</feature>
<feature type="mutagenesis site" description="Abolishes deubiquitination enzyme activity." evidence="4">
    <original>C</original>
    <variation>A</variation>
    <variation>S</variation>
    <location>
        <position position="447"/>
    </location>
</feature>
<feature type="sequence conflict" description="In Ref. 1; AAG42756." evidence="8" ref="1">
    <original>R</original>
    <variation>K</variation>
    <location>
        <position position="106"/>
    </location>
</feature>
<feature type="sequence conflict" description="In Ref. 1; AAG42756." evidence="8" ref="1">
    <original>I</original>
    <variation>V</variation>
    <location>
        <position position="390"/>
    </location>
</feature>
<feature type="sequence conflict" description="In Ref. 1; AAG42756." evidence="8" ref="1">
    <original>Q</original>
    <variation>P</variation>
    <location>
        <position position="536"/>
    </location>
</feature>
<feature type="sequence conflict" description="In Ref. 1; AAG42756." evidence="8" ref="1">
    <original>R</original>
    <variation>H</variation>
    <location>
        <position position="568"/>
    </location>
</feature>
<feature type="sequence conflict" description="In Ref. 1; AAG42756." evidence="8" ref="1">
    <original>SL</original>
    <variation>FF</variation>
    <location>
        <begin position="599"/>
        <end position="600"/>
    </location>
</feature>
<feature type="sequence conflict" description="In Ref. 1; AAG42756." evidence="8" ref="1">
    <original>T</original>
    <variation>I</variation>
    <location>
        <position position="605"/>
    </location>
</feature>
<comment type="function">
    <text evidence="4 5 9">Recognizes and hydrolyzes the peptide bond at the C-terminal Gly of ubiquitin. Involved in the processing of poly-ubiquitin precursors as well as that of ubiquitinated proteins (Probable). Involved in the regulation of organ size. Acts as a positive regulator of cell proliferation. Possesses deubiquitinating enzyme activity in vitro. The enzyme activity of UBP15 is required for its function in regulation of cell proliferation (PubMed:18485060). Functions antagonistically in a common pathway with DA1 to regulate seed size. Acts maternally to regulate seed size by promoting cell proliferation in the integuments of ovules and developing seeds. Functions independently of DA2 and BB (PubMed:24585836).</text>
</comment>
<comment type="catalytic activity">
    <reaction evidence="4">
        <text>Thiol-dependent hydrolysis of ester, thioester, amide, peptide and isopeptide bonds formed by the C-terminal Gly of ubiquitin (a 76-residue protein attached to proteins as an intracellular targeting signal).</text>
        <dbReference type="EC" id="3.4.19.12"/>
    </reaction>
</comment>
<comment type="subunit">
    <text evidence="5">Interacts with DA1.</text>
</comment>
<comment type="subcellular location">
    <subcellularLocation>
        <location evidence="4">Cytoplasm</location>
    </subcellularLocation>
    <subcellularLocation>
        <location evidence="4">Nucleus</location>
    </subcellularLocation>
</comment>
<comment type="alternative products">
    <event type="alternative splicing"/>
    <isoform>
        <id>Q9FPS9-1</id>
        <name>1</name>
        <sequence type="displayed"/>
    </isoform>
    <text>A number of isoforms are produced. According to EST sequences.</text>
</comment>
<comment type="tissue specificity">
    <text evidence="4">Highly expressed in rosette leaves and inflorescence. Expressed at low levels in cotyledons, stems, cauline leaves and siliques.</text>
</comment>
<comment type="disruption phenotype">
    <text evidence="4 5">Narrow, serrated and flat rosette leaves, early flowering, weak apical dominance and reduced fertility, partially due to defect in cell proliferation (PubMed:18485060). Reduced seed weight (PubMed:24585836).</text>
</comment>
<comment type="similarity">
    <text evidence="8">Belongs to the peptidase C19 family.</text>
</comment>
<comment type="sequence caution" evidence="8">
    <conflict type="erroneous gene model prediction">
        <sequence resource="EMBL-CDS" id="AAD50020"/>
    </conflict>
</comment>
<organism>
    <name type="scientific">Arabidopsis thaliana</name>
    <name type="common">Mouse-ear cress</name>
    <dbReference type="NCBI Taxonomy" id="3702"/>
    <lineage>
        <taxon>Eukaryota</taxon>
        <taxon>Viridiplantae</taxon>
        <taxon>Streptophyta</taxon>
        <taxon>Embryophyta</taxon>
        <taxon>Tracheophyta</taxon>
        <taxon>Spermatophyta</taxon>
        <taxon>Magnoliopsida</taxon>
        <taxon>eudicotyledons</taxon>
        <taxon>Gunneridae</taxon>
        <taxon>Pentapetalae</taxon>
        <taxon>rosids</taxon>
        <taxon>malvids</taxon>
        <taxon>Brassicales</taxon>
        <taxon>Brassicaceae</taxon>
        <taxon>Camelineae</taxon>
        <taxon>Arabidopsis</taxon>
    </lineage>
</organism>
<evidence type="ECO:0000255" key="1">
    <source>
        <dbReference type="PROSITE-ProRule" id="PRU00134"/>
    </source>
</evidence>
<evidence type="ECO:0000255" key="2">
    <source>
        <dbReference type="PROSITE-ProRule" id="PRU10092"/>
    </source>
</evidence>
<evidence type="ECO:0000256" key="3">
    <source>
        <dbReference type="SAM" id="MobiDB-lite"/>
    </source>
</evidence>
<evidence type="ECO:0000269" key="4">
    <source>
    </source>
</evidence>
<evidence type="ECO:0000269" key="5">
    <source>
    </source>
</evidence>
<evidence type="ECO:0000303" key="6">
    <source>
    </source>
</evidence>
<evidence type="ECO:0000303" key="7">
    <source>
    </source>
</evidence>
<evidence type="ECO:0000305" key="8"/>
<evidence type="ECO:0000305" key="9">
    <source>
    </source>
</evidence>
<dbReference type="EC" id="3.4.19.12" evidence="4"/>
<dbReference type="EMBL" id="AF302665">
    <property type="protein sequence ID" value="AAG42756.1"/>
    <property type="molecule type" value="mRNA"/>
</dbReference>
<dbReference type="EMBL" id="AC007651">
    <property type="protein sequence ID" value="AAD50020.1"/>
    <property type="status" value="ALT_SEQ"/>
    <property type="molecule type" value="Genomic_DNA"/>
</dbReference>
<dbReference type="EMBL" id="CP002684">
    <property type="protein sequence ID" value="AEE29542.1"/>
    <property type="molecule type" value="Genomic_DNA"/>
</dbReference>
<dbReference type="EMBL" id="CP002684">
    <property type="protein sequence ID" value="ANM60192.1"/>
    <property type="molecule type" value="Genomic_DNA"/>
</dbReference>
<dbReference type="PIR" id="H86306">
    <property type="entry name" value="H86306"/>
</dbReference>
<dbReference type="RefSeq" id="NP_001322494.1">
    <molecule id="Q9FPS9-1"/>
    <property type="nucleotide sequence ID" value="NM_001332280.1"/>
</dbReference>
<dbReference type="RefSeq" id="NP_564014.1">
    <molecule id="Q9FPS9-1"/>
    <property type="nucleotide sequence ID" value="NM_101571.2"/>
</dbReference>
<dbReference type="SMR" id="Q9FPS9"/>
<dbReference type="BioGRID" id="23521">
    <property type="interactions" value="3"/>
</dbReference>
<dbReference type="FunCoup" id="Q9FPS9">
    <property type="interactions" value="515"/>
</dbReference>
<dbReference type="STRING" id="3702.Q9FPS9"/>
<dbReference type="MEROPS" id="C19.096"/>
<dbReference type="GlyGen" id="Q9FPS9">
    <property type="glycosylation" value="1 site"/>
</dbReference>
<dbReference type="PaxDb" id="3702-AT1G17110.2"/>
<dbReference type="ProteomicsDB" id="233048">
    <molecule id="Q9FPS9-1"/>
</dbReference>
<dbReference type="EnsemblPlants" id="AT1G17110.1">
    <molecule id="Q9FPS9-1"/>
    <property type="protein sequence ID" value="AT1G17110.1"/>
    <property type="gene ID" value="AT1G17110"/>
</dbReference>
<dbReference type="EnsemblPlants" id="AT1G17110.3">
    <molecule id="Q9FPS9-1"/>
    <property type="protein sequence ID" value="AT1G17110.3"/>
    <property type="gene ID" value="AT1G17110"/>
</dbReference>
<dbReference type="GeneID" id="838281"/>
<dbReference type="Gramene" id="AT1G17110.1">
    <molecule id="Q9FPS9-1"/>
    <property type="protein sequence ID" value="AT1G17110.1"/>
    <property type="gene ID" value="AT1G17110"/>
</dbReference>
<dbReference type="Gramene" id="AT1G17110.3">
    <molecule id="Q9FPS9-1"/>
    <property type="protein sequence ID" value="AT1G17110.3"/>
    <property type="gene ID" value="AT1G17110"/>
</dbReference>
<dbReference type="KEGG" id="ath:AT1G17110"/>
<dbReference type="Araport" id="AT1G17110"/>
<dbReference type="TAIR" id="AT1G17110">
    <property type="gene designation" value="UBP15"/>
</dbReference>
<dbReference type="eggNOG" id="KOG1865">
    <property type="taxonomic scope" value="Eukaryota"/>
</dbReference>
<dbReference type="InParanoid" id="Q9FPS9"/>
<dbReference type="OMA" id="HECARCS"/>
<dbReference type="PhylomeDB" id="Q9FPS9"/>
<dbReference type="PRO" id="PR:Q9FPS9"/>
<dbReference type="Proteomes" id="UP000006548">
    <property type="component" value="Chromosome 1"/>
</dbReference>
<dbReference type="ExpressionAtlas" id="Q9FPS9">
    <property type="expression patterns" value="baseline and differential"/>
</dbReference>
<dbReference type="GO" id="GO:0005737">
    <property type="term" value="C:cytoplasm"/>
    <property type="evidence" value="ECO:0007669"/>
    <property type="project" value="UniProtKB-SubCell"/>
</dbReference>
<dbReference type="GO" id="GO:0005634">
    <property type="term" value="C:nucleus"/>
    <property type="evidence" value="ECO:0007669"/>
    <property type="project" value="UniProtKB-SubCell"/>
</dbReference>
<dbReference type="GO" id="GO:0004843">
    <property type="term" value="F:cysteine-type deubiquitinase activity"/>
    <property type="evidence" value="ECO:0007669"/>
    <property type="project" value="UniProtKB-EC"/>
</dbReference>
<dbReference type="GO" id="GO:0008270">
    <property type="term" value="F:zinc ion binding"/>
    <property type="evidence" value="ECO:0007669"/>
    <property type="project" value="UniProtKB-KW"/>
</dbReference>
<dbReference type="GO" id="GO:0016579">
    <property type="term" value="P:protein deubiquitination"/>
    <property type="evidence" value="ECO:0007669"/>
    <property type="project" value="InterPro"/>
</dbReference>
<dbReference type="GO" id="GO:0006508">
    <property type="term" value="P:proteolysis"/>
    <property type="evidence" value="ECO:0007669"/>
    <property type="project" value="UniProtKB-KW"/>
</dbReference>
<dbReference type="CDD" id="cd02661">
    <property type="entry name" value="Peptidase_C19E"/>
    <property type="match status" value="1"/>
</dbReference>
<dbReference type="FunFam" id="3.90.70.10:FF:000026">
    <property type="entry name" value="Ubiquitin carboxyl-terminal hydrolase 15"/>
    <property type="match status" value="1"/>
</dbReference>
<dbReference type="FunFam" id="6.10.140.2220:FF:000006">
    <property type="entry name" value="Ubiquitin carboxyl-terminal hydrolase 15"/>
    <property type="match status" value="1"/>
</dbReference>
<dbReference type="Gene3D" id="6.10.140.2220">
    <property type="match status" value="1"/>
</dbReference>
<dbReference type="Gene3D" id="3.90.70.10">
    <property type="entry name" value="Cysteine proteinases"/>
    <property type="match status" value="1"/>
</dbReference>
<dbReference type="InterPro" id="IPR038765">
    <property type="entry name" value="Papain-like_cys_pep_sf"/>
</dbReference>
<dbReference type="InterPro" id="IPR050164">
    <property type="entry name" value="Peptidase_C19"/>
</dbReference>
<dbReference type="InterPro" id="IPR001394">
    <property type="entry name" value="Peptidase_C19_UCH"/>
</dbReference>
<dbReference type="InterPro" id="IPR018200">
    <property type="entry name" value="USP_CS"/>
</dbReference>
<dbReference type="InterPro" id="IPR028889">
    <property type="entry name" value="USP_dom"/>
</dbReference>
<dbReference type="InterPro" id="IPR002893">
    <property type="entry name" value="Znf_MYND"/>
</dbReference>
<dbReference type="PANTHER" id="PTHR24006">
    <property type="entry name" value="UBIQUITIN CARBOXYL-TERMINAL HYDROLASE"/>
    <property type="match status" value="1"/>
</dbReference>
<dbReference type="PANTHER" id="PTHR24006:SF685">
    <property type="entry name" value="UBIQUITIN CARBOXYL-TERMINAL HYDROLASE 15"/>
    <property type="match status" value="1"/>
</dbReference>
<dbReference type="Pfam" id="PF00443">
    <property type="entry name" value="UCH"/>
    <property type="match status" value="1"/>
</dbReference>
<dbReference type="Pfam" id="PF01753">
    <property type="entry name" value="zf-MYND"/>
    <property type="match status" value="1"/>
</dbReference>
<dbReference type="SUPFAM" id="SSF54001">
    <property type="entry name" value="Cysteine proteinases"/>
    <property type="match status" value="1"/>
</dbReference>
<dbReference type="SUPFAM" id="SSF144232">
    <property type="entry name" value="HIT/MYND zinc finger-like"/>
    <property type="match status" value="1"/>
</dbReference>
<dbReference type="PROSITE" id="PS00972">
    <property type="entry name" value="USP_1"/>
    <property type="match status" value="1"/>
</dbReference>
<dbReference type="PROSITE" id="PS50235">
    <property type="entry name" value="USP_3"/>
    <property type="match status" value="1"/>
</dbReference>
<dbReference type="PROSITE" id="PS01360">
    <property type="entry name" value="ZF_MYND_1"/>
    <property type="match status" value="1"/>
</dbReference>
<dbReference type="PROSITE" id="PS50865">
    <property type="entry name" value="ZF_MYND_2"/>
    <property type="match status" value="1"/>
</dbReference>
<accession>Q9FPS9</accession>
<accession>Q9SHG9</accession>
<proteinExistence type="evidence at protein level"/>
<name>UBP15_ARATH</name>